<comment type="function">
    <text evidence="1">Catalyzes the NADPH-dependent reduction of L-glutamate 5-phosphate into L-glutamate 5-semialdehyde and phosphate. The product spontaneously undergoes cyclization to form 1-pyrroline-5-carboxylate.</text>
</comment>
<comment type="catalytic activity">
    <reaction evidence="1">
        <text>L-glutamate 5-semialdehyde + phosphate + NADP(+) = L-glutamyl 5-phosphate + NADPH + H(+)</text>
        <dbReference type="Rhea" id="RHEA:19541"/>
        <dbReference type="ChEBI" id="CHEBI:15378"/>
        <dbReference type="ChEBI" id="CHEBI:43474"/>
        <dbReference type="ChEBI" id="CHEBI:57783"/>
        <dbReference type="ChEBI" id="CHEBI:58066"/>
        <dbReference type="ChEBI" id="CHEBI:58274"/>
        <dbReference type="ChEBI" id="CHEBI:58349"/>
        <dbReference type="EC" id="1.2.1.41"/>
    </reaction>
</comment>
<comment type="pathway">
    <text evidence="1">Amino-acid biosynthesis; L-proline biosynthesis; L-glutamate 5-semialdehyde from L-glutamate: step 2/2.</text>
</comment>
<comment type="subcellular location">
    <subcellularLocation>
        <location evidence="1">Cytoplasm</location>
    </subcellularLocation>
</comment>
<comment type="similarity">
    <text evidence="1">Belongs to the gamma-glutamyl phosphate reductase family.</text>
</comment>
<name>PROA_LISW6</name>
<protein>
    <recommendedName>
        <fullName evidence="1">Gamma-glutamyl phosphate reductase</fullName>
        <shortName evidence="1">GPR</shortName>
        <ecNumber evidence="1">1.2.1.41</ecNumber>
    </recommendedName>
    <alternativeName>
        <fullName evidence="1">Glutamate-5-semialdehyde dehydrogenase</fullName>
    </alternativeName>
    <alternativeName>
        <fullName evidence="1">Glutamyl-gamma-semialdehyde dehydrogenase</fullName>
        <shortName evidence="1">GSA dehydrogenase</shortName>
    </alternativeName>
</protein>
<sequence length="415" mass="45776">MTELIKKGIAAREASSFLAQATTKQKNTALINLSNDLIANTATLLKENEKDIIRAKEKKTPDTMIDRLRLTEERIKEISEAVKQVVTLKDPIGEVTTMWKNEAELTIGKIRVPLGVIGIIYESRPNVTVDASILCFKTGNAVILRGGSDAIDSNKALMNVIQESLEKSGFPRTSVQLIEDTSRETAREMMRLNRFLDVLIPRGGAKLIQTVLENATVPVIETGTGNCHIYVDKAAEKQMAIDILVNAKCSRPSVCNSAETLLIHESVAEDFLPAMEMALKEYNVELRADKRAREILKDAKAATESDWEEEFLDFILAIKVVDSVEEAINHINKYGTKHSEAIISNDYATGQAFHQKVDAAAVYINASTRFTDGFAMGFGAEIGISTQKLHARGPMGLTELTSTKYIIFGDGQIRN</sequence>
<feature type="chain" id="PRO_1000049961" description="Gamma-glutamyl phosphate reductase">
    <location>
        <begin position="1"/>
        <end position="415"/>
    </location>
</feature>
<proteinExistence type="inferred from homology"/>
<evidence type="ECO:0000255" key="1">
    <source>
        <dbReference type="HAMAP-Rule" id="MF_00412"/>
    </source>
</evidence>
<dbReference type="EC" id="1.2.1.41" evidence="1"/>
<dbReference type="EMBL" id="AM263198">
    <property type="protein sequence ID" value="CAK20696.1"/>
    <property type="molecule type" value="Genomic_DNA"/>
</dbReference>
<dbReference type="RefSeq" id="WP_011702087.1">
    <property type="nucleotide sequence ID" value="NC_008555.1"/>
</dbReference>
<dbReference type="SMR" id="A0AI64"/>
<dbReference type="STRING" id="386043.lwe1278"/>
<dbReference type="GeneID" id="61189155"/>
<dbReference type="KEGG" id="lwe:lwe1278"/>
<dbReference type="eggNOG" id="COG0014">
    <property type="taxonomic scope" value="Bacteria"/>
</dbReference>
<dbReference type="HOGENOM" id="CLU_030231_0_0_9"/>
<dbReference type="OrthoDB" id="9809970at2"/>
<dbReference type="UniPathway" id="UPA00098">
    <property type="reaction ID" value="UER00360"/>
</dbReference>
<dbReference type="Proteomes" id="UP000000779">
    <property type="component" value="Chromosome"/>
</dbReference>
<dbReference type="GO" id="GO:0005737">
    <property type="term" value="C:cytoplasm"/>
    <property type="evidence" value="ECO:0007669"/>
    <property type="project" value="UniProtKB-SubCell"/>
</dbReference>
<dbReference type="GO" id="GO:0004350">
    <property type="term" value="F:glutamate-5-semialdehyde dehydrogenase activity"/>
    <property type="evidence" value="ECO:0007669"/>
    <property type="project" value="UniProtKB-UniRule"/>
</dbReference>
<dbReference type="GO" id="GO:0050661">
    <property type="term" value="F:NADP binding"/>
    <property type="evidence" value="ECO:0007669"/>
    <property type="project" value="InterPro"/>
</dbReference>
<dbReference type="GO" id="GO:0055129">
    <property type="term" value="P:L-proline biosynthetic process"/>
    <property type="evidence" value="ECO:0007669"/>
    <property type="project" value="UniProtKB-UniRule"/>
</dbReference>
<dbReference type="CDD" id="cd07079">
    <property type="entry name" value="ALDH_F18-19_ProA-GPR"/>
    <property type="match status" value="1"/>
</dbReference>
<dbReference type="FunFam" id="3.40.309.10:FF:000006">
    <property type="entry name" value="Gamma-glutamyl phosphate reductase"/>
    <property type="match status" value="1"/>
</dbReference>
<dbReference type="Gene3D" id="3.40.605.10">
    <property type="entry name" value="Aldehyde Dehydrogenase, Chain A, domain 1"/>
    <property type="match status" value="1"/>
</dbReference>
<dbReference type="Gene3D" id="3.40.309.10">
    <property type="entry name" value="Aldehyde Dehydrogenase, Chain A, domain 2"/>
    <property type="match status" value="1"/>
</dbReference>
<dbReference type="HAMAP" id="MF_00412">
    <property type="entry name" value="ProA"/>
    <property type="match status" value="1"/>
</dbReference>
<dbReference type="InterPro" id="IPR016161">
    <property type="entry name" value="Ald_DH/histidinol_DH"/>
</dbReference>
<dbReference type="InterPro" id="IPR016163">
    <property type="entry name" value="Ald_DH_C"/>
</dbReference>
<dbReference type="InterPro" id="IPR016162">
    <property type="entry name" value="Ald_DH_N"/>
</dbReference>
<dbReference type="InterPro" id="IPR015590">
    <property type="entry name" value="Aldehyde_DH_dom"/>
</dbReference>
<dbReference type="InterPro" id="IPR020593">
    <property type="entry name" value="G-glutamylP_reductase_CS"/>
</dbReference>
<dbReference type="InterPro" id="IPR012134">
    <property type="entry name" value="Glu-5-SA_DH"/>
</dbReference>
<dbReference type="InterPro" id="IPR000965">
    <property type="entry name" value="GPR_dom"/>
</dbReference>
<dbReference type="NCBIfam" id="NF001221">
    <property type="entry name" value="PRK00197.1"/>
    <property type="match status" value="1"/>
</dbReference>
<dbReference type="NCBIfam" id="TIGR00407">
    <property type="entry name" value="proA"/>
    <property type="match status" value="1"/>
</dbReference>
<dbReference type="PANTHER" id="PTHR11063:SF8">
    <property type="entry name" value="DELTA-1-PYRROLINE-5-CARBOXYLATE SYNTHASE"/>
    <property type="match status" value="1"/>
</dbReference>
<dbReference type="PANTHER" id="PTHR11063">
    <property type="entry name" value="GLUTAMATE SEMIALDEHYDE DEHYDROGENASE"/>
    <property type="match status" value="1"/>
</dbReference>
<dbReference type="Pfam" id="PF00171">
    <property type="entry name" value="Aldedh"/>
    <property type="match status" value="1"/>
</dbReference>
<dbReference type="PIRSF" id="PIRSF000151">
    <property type="entry name" value="GPR"/>
    <property type="match status" value="1"/>
</dbReference>
<dbReference type="SUPFAM" id="SSF53720">
    <property type="entry name" value="ALDH-like"/>
    <property type="match status" value="1"/>
</dbReference>
<dbReference type="PROSITE" id="PS01223">
    <property type="entry name" value="PROA"/>
    <property type="match status" value="1"/>
</dbReference>
<reference key="1">
    <citation type="journal article" date="2006" name="J. Bacteriol.">
        <title>Whole-genome sequence of Listeria welshimeri reveals common steps in genome reduction with Listeria innocua as compared to Listeria monocytogenes.</title>
        <authorList>
            <person name="Hain T."/>
            <person name="Steinweg C."/>
            <person name="Kuenne C.T."/>
            <person name="Billion A."/>
            <person name="Ghai R."/>
            <person name="Chatterjee S.S."/>
            <person name="Domann E."/>
            <person name="Kaerst U."/>
            <person name="Goesmann A."/>
            <person name="Bekel T."/>
            <person name="Bartels D."/>
            <person name="Kaiser O."/>
            <person name="Meyer F."/>
            <person name="Puehler A."/>
            <person name="Weisshaar B."/>
            <person name="Wehland J."/>
            <person name="Liang C."/>
            <person name="Dandekar T."/>
            <person name="Lampidis R."/>
            <person name="Kreft J."/>
            <person name="Goebel W."/>
            <person name="Chakraborty T."/>
        </authorList>
    </citation>
    <scope>NUCLEOTIDE SEQUENCE [LARGE SCALE GENOMIC DNA]</scope>
    <source>
        <strain>ATCC 35897 / DSM 20650 / CCUG 15529 / CIP 8149 / NCTC 11857 / SLCC 5334 / V8</strain>
    </source>
</reference>
<keyword id="KW-0028">Amino-acid biosynthesis</keyword>
<keyword id="KW-0963">Cytoplasm</keyword>
<keyword id="KW-0521">NADP</keyword>
<keyword id="KW-0560">Oxidoreductase</keyword>
<keyword id="KW-0641">Proline biosynthesis</keyword>
<accession>A0AI64</accession>
<organism>
    <name type="scientific">Listeria welshimeri serovar 6b (strain ATCC 35897 / DSM 20650 / CCUG 15529 / CIP 8149 / NCTC 11857 / SLCC 5334 / V8)</name>
    <dbReference type="NCBI Taxonomy" id="386043"/>
    <lineage>
        <taxon>Bacteria</taxon>
        <taxon>Bacillati</taxon>
        <taxon>Bacillota</taxon>
        <taxon>Bacilli</taxon>
        <taxon>Bacillales</taxon>
        <taxon>Listeriaceae</taxon>
        <taxon>Listeria</taxon>
    </lineage>
</organism>
<gene>
    <name evidence="1" type="primary">proA</name>
    <name type="ordered locus">lwe1278</name>
</gene>